<accession>B5Y159</accession>
<sequence length="180" mass="21245">MEYKCCSDKYIWSAHDSYFYKGLSELILDIDELIYLSQEKIRKDFVFINLNTASLNEFIRRDSEWLSAVKGKQVVLIAARKSEALANYWYYNSNIRGVVYVGLSRDIRKELAYVINGRFLRKDIKKDKITDREMKIIRMTAQGMQPKSIARIENCSVKTVYTHRRNAEAKLYSKIYKLVQ</sequence>
<keyword id="KW-0010">Activator</keyword>
<keyword id="KW-0963">Cytoplasm</keyword>
<keyword id="KW-0238">DNA-binding</keyword>
<keyword id="KW-0804">Transcription</keyword>
<keyword id="KW-0805">Transcription regulation</keyword>
<proteinExistence type="inferred from homology"/>
<comment type="function">
    <text evidence="1">Part of the ecpRABCDE operon, which encodes the E.coli common pilus (ECP). ECP plays a dual role in early-stage biofilm development and host cell recognition. Positively regulates the expression of the ecp operon (By similarity).</text>
</comment>
<comment type="subcellular location">
    <subcellularLocation>
        <location evidence="3">Cytoplasm</location>
    </subcellularLocation>
</comment>
<comment type="similarity">
    <text evidence="3">Belongs to the EcpR/MatA family.</text>
</comment>
<reference key="1">
    <citation type="journal article" date="2008" name="PLoS Genet.">
        <title>Complete genome sequence of the N2-fixing broad host range endophyte Klebsiella pneumoniae 342 and virulence predictions verified in mice.</title>
        <authorList>
            <person name="Fouts D.E."/>
            <person name="Tyler H.L."/>
            <person name="DeBoy R.T."/>
            <person name="Daugherty S."/>
            <person name="Ren Q."/>
            <person name="Badger J.H."/>
            <person name="Durkin A.S."/>
            <person name="Huot H."/>
            <person name="Shrivastava S."/>
            <person name="Kothari S."/>
            <person name="Dodson R.J."/>
            <person name="Mohamoud Y."/>
            <person name="Khouri H."/>
            <person name="Roesch L.F.W."/>
            <person name="Krogfelt K.A."/>
            <person name="Struve C."/>
            <person name="Triplett E.W."/>
            <person name="Methe B.A."/>
        </authorList>
    </citation>
    <scope>NUCLEOTIDE SEQUENCE [LARGE SCALE GENOMIC DNA]</scope>
    <source>
        <strain>342</strain>
    </source>
</reference>
<dbReference type="EMBL" id="CP000964">
    <property type="protein sequence ID" value="ACI06920.1"/>
    <property type="molecule type" value="Genomic_DNA"/>
</dbReference>
<dbReference type="SMR" id="B5Y159"/>
<dbReference type="KEGG" id="kpe:KPK_4400"/>
<dbReference type="HOGENOM" id="CLU_128111_0_0_6"/>
<dbReference type="Proteomes" id="UP000001734">
    <property type="component" value="Chromosome"/>
</dbReference>
<dbReference type="GO" id="GO:0005737">
    <property type="term" value="C:cytoplasm"/>
    <property type="evidence" value="ECO:0007669"/>
    <property type="project" value="UniProtKB-SubCell"/>
</dbReference>
<dbReference type="GO" id="GO:0003677">
    <property type="term" value="F:DNA binding"/>
    <property type="evidence" value="ECO:0007669"/>
    <property type="project" value="UniProtKB-KW"/>
</dbReference>
<dbReference type="GO" id="GO:0006355">
    <property type="term" value="P:regulation of DNA-templated transcription"/>
    <property type="evidence" value="ECO:0007669"/>
    <property type="project" value="InterPro"/>
</dbReference>
<dbReference type="CDD" id="cd06170">
    <property type="entry name" value="LuxR_C_like"/>
    <property type="match status" value="1"/>
</dbReference>
<dbReference type="Gene3D" id="1.10.10.10">
    <property type="entry name" value="Winged helix-like DNA-binding domain superfamily/Winged helix DNA-binding domain"/>
    <property type="match status" value="1"/>
</dbReference>
<dbReference type="InterPro" id="IPR016032">
    <property type="entry name" value="Sig_transdc_resp-reg_C-effctor"/>
</dbReference>
<dbReference type="InterPro" id="IPR000792">
    <property type="entry name" value="Tscrpt_reg_LuxR_C"/>
</dbReference>
<dbReference type="InterPro" id="IPR036388">
    <property type="entry name" value="WH-like_DNA-bd_sf"/>
</dbReference>
<dbReference type="Pfam" id="PF00196">
    <property type="entry name" value="GerE"/>
    <property type="match status" value="1"/>
</dbReference>
<dbReference type="PRINTS" id="PR00038">
    <property type="entry name" value="HTHLUXR"/>
</dbReference>
<dbReference type="SMART" id="SM00421">
    <property type="entry name" value="HTH_LUXR"/>
    <property type="match status" value="1"/>
</dbReference>
<dbReference type="SUPFAM" id="SSF46894">
    <property type="entry name" value="C-terminal effector domain of the bipartite response regulators"/>
    <property type="match status" value="1"/>
</dbReference>
<dbReference type="PROSITE" id="PS50043">
    <property type="entry name" value="HTH_LUXR_2"/>
    <property type="match status" value="1"/>
</dbReference>
<name>ECPR_KLEP3</name>
<gene>
    <name type="primary">ecpR</name>
    <name type="synonym">matA</name>
    <name type="ordered locus">KPK_4400</name>
</gene>
<evidence type="ECO:0000250" key="1"/>
<evidence type="ECO:0000255" key="2">
    <source>
        <dbReference type="PROSITE-ProRule" id="PRU00411"/>
    </source>
</evidence>
<evidence type="ECO:0000305" key="3"/>
<organism>
    <name type="scientific">Klebsiella pneumoniae (strain 342)</name>
    <dbReference type="NCBI Taxonomy" id="507522"/>
    <lineage>
        <taxon>Bacteria</taxon>
        <taxon>Pseudomonadati</taxon>
        <taxon>Pseudomonadota</taxon>
        <taxon>Gammaproteobacteria</taxon>
        <taxon>Enterobacterales</taxon>
        <taxon>Enterobacteriaceae</taxon>
        <taxon>Klebsiella/Raoultella group</taxon>
        <taxon>Klebsiella</taxon>
        <taxon>Klebsiella pneumoniae complex</taxon>
    </lineage>
</organism>
<protein>
    <recommendedName>
        <fullName>HTH-type transcriptional regulator EcpR</fullName>
    </recommendedName>
</protein>
<feature type="chain" id="PRO_0000369187" description="HTH-type transcriptional regulator EcpR">
    <location>
        <begin position="1"/>
        <end position="180"/>
    </location>
</feature>
<feature type="domain" description="HTH luxR-type" evidence="2">
    <location>
        <begin position="122"/>
        <end position="180"/>
    </location>
</feature>
<feature type="DNA-binding region" description="H-T-H motif" evidence="2">
    <location>
        <begin position="146"/>
        <end position="165"/>
    </location>
</feature>